<organism>
    <name type="scientific">Human immunodeficiency virus type 1 group M subtype B (isolate CDC-451)</name>
    <name type="common">HIV-1</name>
    <dbReference type="NCBI Taxonomy" id="11687"/>
    <lineage>
        <taxon>Viruses</taxon>
        <taxon>Riboviria</taxon>
        <taxon>Pararnavirae</taxon>
        <taxon>Artverviricota</taxon>
        <taxon>Revtraviricetes</taxon>
        <taxon>Ortervirales</taxon>
        <taxon>Retroviridae</taxon>
        <taxon>Orthoretrovirinae</taxon>
        <taxon>Lentivirus</taxon>
        <taxon>Human immunodeficiency virus type 1</taxon>
    </lineage>
</organism>
<gene>
    <name evidence="1" type="primary">rev</name>
</gene>
<evidence type="ECO:0000255" key="1">
    <source>
        <dbReference type="HAMAP-Rule" id="MF_04077"/>
    </source>
</evidence>
<evidence type="ECO:0000256" key="2">
    <source>
        <dbReference type="SAM" id="MobiDB-lite"/>
    </source>
</evidence>
<accession>P05865</accession>
<name>REV_HV1C4</name>
<feature type="chain" id="PRO_0000085261" description="Protein Rev">
    <location>
        <begin position="1"/>
        <end position="116"/>
    </location>
</feature>
<feature type="region of interest" description="Homomultimerization" evidence="1">
    <location>
        <begin position="18"/>
        <end position="26"/>
    </location>
</feature>
<feature type="region of interest" description="Disordered" evidence="2">
    <location>
        <begin position="20"/>
        <end position="48"/>
    </location>
</feature>
<feature type="region of interest" description="Disordered" evidence="2">
    <location>
        <begin position="91"/>
        <end position="116"/>
    </location>
</feature>
<feature type="short sequence motif" description="Nuclear localization signal and RNA-binding (RRE)" evidence="1">
    <location>
        <begin position="34"/>
        <end position="50"/>
    </location>
</feature>
<feature type="short sequence motif" description="Nuclear export signal and binding to XPO1" evidence="1">
    <location>
        <begin position="73"/>
        <end position="84"/>
    </location>
</feature>
<feature type="compositionally biased region" description="Basic residues" evidence="2">
    <location>
        <begin position="36"/>
        <end position="48"/>
    </location>
</feature>
<feature type="modified residue" description="Phosphoserine; by host CK2" evidence="1">
    <location>
        <position position="5"/>
    </location>
</feature>
<feature type="modified residue" description="Phosphoserine; by host CK2" evidence="1">
    <location>
        <position position="8"/>
    </location>
</feature>
<feature type="modified residue" description="Phosphoserine; by host" evidence="1">
    <location>
        <position position="92"/>
    </location>
</feature>
<feature type="modified residue" description="Phosphoserine; by host" evidence="1">
    <location>
        <position position="99"/>
    </location>
</feature>
<dbReference type="EMBL" id="AH002346">
    <property type="protein sequence ID" value="AAA44310.1"/>
    <property type="molecule type" value="Genomic_RNA"/>
</dbReference>
<dbReference type="ELM" id="P05865"/>
<dbReference type="GO" id="GO:0030430">
    <property type="term" value="C:host cell cytoplasm"/>
    <property type="evidence" value="ECO:0007669"/>
    <property type="project" value="UniProtKB-SubCell"/>
</dbReference>
<dbReference type="GO" id="GO:0044196">
    <property type="term" value="C:host cell nucleolus"/>
    <property type="evidence" value="ECO:0007669"/>
    <property type="project" value="UniProtKB-SubCell"/>
</dbReference>
<dbReference type="GO" id="GO:0003700">
    <property type="term" value="F:DNA-binding transcription factor activity"/>
    <property type="evidence" value="ECO:0007669"/>
    <property type="project" value="UniProtKB-UniRule"/>
</dbReference>
<dbReference type="GO" id="GO:0003723">
    <property type="term" value="F:RNA binding"/>
    <property type="evidence" value="ECO:0007669"/>
    <property type="project" value="UniProtKB-UniRule"/>
</dbReference>
<dbReference type="GO" id="GO:0051028">
    <property type="term" value="P:mRNA transport"/>
    <property type="evidence" value="ECO:0007669"/>
    <property type="project" value="UniProtKB-UniRule"/>
</dbReference>
<dbReference type="GO" id="GO:0016032">
    <property type="term" value="P:viral process"/>
    <property type="evidence" value="ECO:0007669"/>
    <property type="project" value="UniProtKB-UniRule"/>
</dbReference>
<dbReference type="Gene3D" id="6.10.140.630">
    <property type="match status" value="1"/>
</dbReference>
<dbReference type="HAMAP" id="MF_04077">
    <property type="entry name" value="REV_HIV1"/>
    <property type="match status" value="1"/>
</dbReference>
<dbReference type="InterPro" id="IPR000625">
    <property type="entry name" value="REV_protein"/>
</dbReference>
<dbReference type="Pfam" id="PF00424">
    <property type="entry name" value="REV"/>
    <property type="match status" value="1"/>
</dbReference>
<reference key="1">
    <citation type="journal article" date="1986" name="Proc. Natl. Acad. Sci. U.S.A.">
        <title>Molecular cloning and primary nucleotide sequence analysis of a distinct human immunodeficiency virus isolate reveal significant divergence in its genomic sequences.</title>
        <authorList>
            <person name="Desai S.M."/>
            <person name="Kalyanaraman V.S."/>
            <person name="Casey J.M."/>
            <person name="Srinivasan A."/>
            <person name="Andersen P.R."/>
            <person name="Devare S.G."/>
        </authorList>
    </citation>
    <scope>NUCLEOTIDE SEQUENCE [GENOMIC RNA]</scope>
</reference>
<reference key="2">
    <citation type="journal article" date="1999" name="Arch. Biochem. Biophys.">
        <title>The ins and outs of HIV Rev.</title>
        <authorList>
            <person name="Hope T.J."/>
        </authorList>
    </citation>
    <scope>REVIEW</scope>
</reference>
<comment type="function">
    <text evidence="1">Escorts unspliced or incompletely spliced viral pre-mRNAs (late transcripts) out of the nucleus of infected cells. These pre-mRNAs carry a recognition sequence called Rev responsive element (RRE) located in the env gene, that is not present in fully spliced viral mRNAs (early transcripts). This function is essential since most viral proteins are translated from unspliced or partially spliced pre-mRNAs which cannot exit the nucleus by the pathway used by fully processed cellular mRNAs. Rev itself is translated from a fully spliced mRNA that readily exits the nucleus. Rev's nuclear localization signal (NLS) binds directly to KPNB1/Importin beta-1 without previous binding to KPNA1/Importin alpha-1. KPNB1 binds to the GDP bound form of RAN (Ran-GDP) and targets Rev to the nucleus. In the nucleus, the conversion from Ran-GDP to Ran-GTP dissociates Rev from KPNB1 and allows Rev's binding to the RRE in viral pre-mRNAs. Rev multimerization on the RRE via cooperative assembly exposes its nuclear export signal (NES) to the surface. Rev can then form a complex with XPO1/CRM1 and Ran-GTP, leading to nuclear export of the complex. Conversion from Ran-GTP to Ran-GDP mediates dissociation of the Rev/RRE/XPO1/RAN complex, so that Rev can return to the nucleus for a subsequent round of export. Beside KPNB1, also seems to interact with TNPO1/Transportin-1, RANBP5/IPO5 and IPO7/RANBP7 for nuclear import. The nucleoporin-like HRB/RIP is an essential cofactor that probably indirectly interacts with Rev to release HIV RNAs from the perinuclear region to the cytoplasm.</text>
</comment>
<comment type="subunit">
    <text evidence="1">Homomultimer; when bound to the RRE. Multimeric assembly is essential for activity and may involve XPO1. Binds to human KPNB1, XPO1, TNPO1, RANBP5 and IPO7. Interacts with the viral Integrase. Interacts with human KHDRBS1. Interacts with human NAP1; this interaction decreases Rev multimerization and stimulates its activity. Interacts with human DEAD-box helicases DDX3 and DDX24; these interactions may serve for viral RNA export to the cytoplasm and packaging, respectively. Interacts with human PSIP1; this interaction may inhibit HIV-1 DNA integration by promoting dissociation of the Integrase-LEDGF/p75 complex.</text>
</comment>
<comment type="subcellular location">
    <subcellularLocation>
        <location evidence="1">Host nucleus</location>
        <location evidence="1">Host nucleolus</location>
    </subcellularLocation>
    <subcellularLocation>
        <location evidence="1">Host cytoplasm</location>
    </subcellularLocation>
    <text evidence="1">The presence of both nuclear import and nuclear export signals leads to continuous shuttling between the nucleus and cytoplasm.</text>
</comment>
<comment type="domain">
    <text evidence="1">The RNA-binding motif binds to the RRE, a 240 bp stem-and-loop structure present in incompletely spliced viral pre-mRNAs. This region also contains the NLS which mediates nuclear localization via KPNB1 binding and, when the N-terminal sequence is present, nucleolar targeting. These overlapping functions prevent Rev bound to RRE from undesirable return to the nucleus. When Rev binds the RRE, the NLS becomes masked while the NES remains accessible. The leucine-rich NES mediates binding to human XPO1.</text>
</comment>
<comment type="PTM">
    <text evidence="1">Asymmetrically arginine dimethylated at one site by host PRMT6. Methylation impairs the RNA-binding activity and export of viral RNA from the nucleus to the cytoplasm.</text>
</comment>
<comment type="PTM">
    <text evidence="1">Phosphorylated by protein kinase CK2. Presence of, and maybe binding to the N-terminus of the regulatory beta subunit of CK2 is necessary for CK2-mediated Rev's phosphorylation.</text>
</comment>
<comment type="miscellaneous">
    <text evidence="1">HIV-1 lineages are divided in three main groups, M (for Major), O (for Outlier), and N (for New, or Non-M, Non-O). The vast majority of strains found worldwide belong to the group M. Group O seems to be endemic to and largely confined to Cameroon and neighboring countries in West Central Africa, where these viruses represent a small minority of HIV-1 strains. The group N is represented by a limited number of isolates from Cameroonian persons. The group M is further subdivided in 9 clades or subtypes (A to D, F to H, J and K).</text>
</comment>
<comment type="similarity">
    <text evidence="1">Belongs to the HIV-1 REV protein family.</text>
</comment>
<keyword id="KW-0014">AIDS</keyword>
<keyword id="KW-1035">Host cytoplasm</keyword>
<keyword id="KW-1048">Host nucleus</keyword>
<keyword id="KW-0945">Host-virus interaction</keyword>
<keyword id="KW-0488">Methylation</keyword>
<keyword id="KW-0509">mRNA transport</keyword>
<keyword id="KW-0597">Phosphoprotein</keyword>
<keyword id="KW-0694">RNA-binding</keyword>
<keyword id="KW-0813">Transport</keyword>
<protein>
    <recommendedName>
        <fullName evidence="1">Protein Rev</fullName>
    </recommendedName>
    <alternativeName>
        <fullName evidence="1">ART/TRS</fullName>
    </alternativeName>
    <alternativeName>
        <fullName evidence="1">Anti-repression transactivator</fullName>
    </alternativeName>
    <alternativeName>
        <fullName evidence="1">Regulator of expression of viral proteins</fullName>
    </alternativeName>
</protein>
<organismHost>
    <name type="scientific">Homo sapiens</name>
    <name type="common">Human</name>
    <dbReference type="NCBI Taxonomy" id="9606"/>
</organismHost>
<proteinExistence type="inferred from homology"/>
<sequence length="116" mass="12998">MAGRSGDSDEELIKTVRIIKHLYQSNPPPKPEGTRQARRNRRRRWRERQRRIHSISAWLLSTCLGRSAEPVPLQLPPLERLTLDCSEDCGTSGTQGVGSPQILVESPAVLESGTKE</sequence>